<gene>
    <name evidence="1" type="primary">rplR</name>
    <name type="ordered locus">CGSHiEE_08095</name>
</gene>
<dbReference type="EMBL" id="CP000671">
    <property type="protein sequence ID" value="ABQ98932.1"/>
    <property type="molecule type" value="Genomic_DNA"/>
</dbReference>
<dbReference type="SMR" id="A5UDT1"/>
<dbReference type="KEGG" id="hip:CGSHiEE_08095"/>
<dbReference type="HOGENOM" id="CLU_098841_0_1_6"/>
<dbReference type="GO" id="GO:0022625">
    <property type="term" value="C:cytosolic large ribosomal subunit"/>
    <property type="evidence" value="ECO:0007669"/>
    <property type="project" value="TreeGrafter"/>
</dbReference>
<dbReference type="GO" id="GO:0008097">
    <property type="term" value="F:5S rRNA binding"/>
    <property type="evidence" value="ECO:0007669"/>
    <property type="project" value="TreeGrafter"/>
</dbReference>
<dbReference type="GO" id="GO:0003735">
    <property type="term" value="F:structural constituent of ribosome"/>
    <property type="evidence" value="ECO:0007669"/>
    <property type="project" value="InterPro"/>
</dbReference>
<dbReference type="GO" id="GO:0006412">
    <property type="term" value="P:translation"/>
    <property type="evidence" value="ECO:0007669"/>
    <property type="project" value="UniProtKB-UniRule"/>
</dbReference>
<dbReference type="CDD" id="cd00432">
    <property type="entry name" value="Ribosomal_L18_L5e"/>
    <property type="match status" value="1"/>
</dbReference>
<dbReference type="FunFam" id="3.30.420.100:FF:000001">
    <property type="entry name" value="50S ribosomal protein L18"/>
    <property type="match status" value="1"/>
</dbReference>
<dbReference type="Gene3D" id="3.30.420.100">
    <property type="match status" value="1"/>
</dbReference>
<dbReference type="HAMAP" id="MF_01337_B">
    <property type="entry name" value="Ribosomal_uL18_B"/>
    <property type="match status" value="1"/>
</dbReference>
<dbReference type="InterPro" id="IPR004389">
    <property type="entry name" value="Ribosomal_uL18_bac-type"/>
</dbReference>
<dbReference type="InterPro" id="IPR005484">
    <property type="entry name" value="Ribosomal_uL18_bac/euk"/>
</dbReference>
<dbReference type="NCBIfam" id="TIGR00060">
    <property type="entry name" value="L18_bact"/>
    <property type="match status" value="1"/>
</dbReference>
<dbReference type="PANTHER" id="PTHR12899">
    <property type="entry name" value="39S RIBOSOMAL PROTEIN L18, MITOCHONDRIAL"/>
    <property type="match status" value="1"/>
</dbReference>
<dbReference type="PANTHER" id="PTHR12899:SF3">
    <property type="entry name" value="LARGE RIBOSOMAL SUBUNIT PROTEIN UL18M"/>
    <property type="match status" value="1"/>
</dbReference>
<dbReference type="Pfam" id="PF00861">
    <property type="entry name" value="Ribosomal_L18p"/>
    <property type="match status" value="1"/>
</dbReference>
<dbReference type="SUPFAM" id="SSF53137">
    <property type="entry name" value="Translational machinery components"/>
    <property type="match status" value="1"/>
</dbReference>
<feature type="chain" id="PRO_1000053031" description="Large ribosomal subunit protein uL18">
    <location>
        <begin position="1"/>
        <end position="117"/>
    </location>
</feature>
<protein>
    <recommendedName>
        <fullName evidence="1">Large ribosomal subunit protein uL18</fullName>
    </recommendedName>
    <alternativeName>
        <fullName evidence="2">50S ribosomal protein L18</fullName>
    </alternativeName>
</protein>
<proteinExistence type="inferred from homology"/>
<comment type="function">
    <text evidence="1">This is one of the proteins that bind and probably mediate the attachment of the 5S RNA into the large ribosomal subunit, where it forms part of the central protuberance.</text>
</comment>
<comment type="subunit">
    <text evidence="1">Part of the 50S ribosomal subunit; part of the 5S rRNA/L5/L18/L25 subcomplex. Contacts the 5S and 23S rRNAs.</text>
</comment>
<comment type="similarity">
    <text evidence="1">Belongs to the universal ribosomal protein uL18 family.</text>
</comment>
<accession>A5UDT1</accession>
<keyword id="KW-0687">Ribonucleoprotein</keyword>
<keyword id="KW-0689">Ribosomal protein</keyword>
<keyword id="KW-0694">RNA-binding</keyword>
<keyword id="KW-0699">rRNA-binding</keyword>
<reference key="1">
    <citation type="journal article" date="2007" name="Genome Biol.">
        <title>Characterization and modeling of the Haemophilus influenzae core and supragenomes based on the complete genomic sequences of Rd and 12 clinical nontypeable strains.</title>
        <authorList>
            <person name="Hogg J.S."/>
            <person name="Hu F.Z."/>
            <person name="Janto B."/>
            <person name="Boissy R."/>
            <person name="Hayes J."/>
            <person name="Keefe R."/>
            <person name="Post J.C."/>
            <person name="Ehrlich G.D."/>
        </authorList>
    </citation>
    <scope>NUCLEOTIDE SEQUENCE [LARGE SCALE GENOMIC DNA]</scope>
    <source>
        <strain>PittEE</strain>
    </source>
</reference>
<name>RL18_HAEIE</name>
<evidence type="ECO:0000255" key="1">
    <source>
        <dbReference type="HAMAP-Rule" id="MF_01337"/>
    </source>
</evidence>
<evidence type="ECO:0000305" key="2"/>
<organism>
    <name type="scientific">Haemophilus influenzae (strain PittEE)</name>
    <dbReference type="NCBI Taxonomy" id="374930"/>
    <lineage>
        <taxon>Bacteria</taxon>
        <taxon>Pseudomonadati</taxon>
        <taxon>Pseudomonadota</taxon>
        <taxon>Gammaproteobacteria</taxon>
        <taxon>Pasteurellales</taxon>
        <taxon>Pasteurellaceae</taxon>
        <taxon>Haemophilus</taxon>
    </lineage>
</organism>
<sequence length="117" mass="12768">MDKKSARIRRAARARHMMREQGVTRLVIHRTPRHIYAQVIAPNGSEVLAAASTVEKAIREQVKYTGNKDAAAAVGKAVAERALAKGVQAVAFDRSGFKYHGRVQTLADAAREAGLQF</sequence>